<gene>
    <name evidence="2" type="primary">ccsA</name>
    <name type="ordered locus">NATL1_08031</name>
</gene>
<organism>
    <name type="scientific">Prochlorococcus marinus (strain NATL1A)</name>
    <dbReference type="NCBI Taxonomy" id="167555"/>
    <lineage>
        <taxon>Bacteria</taxon>
        <taxon>Bacillati</taxon>
        <taxon>Cyanobacteriota</taxon>
        <taxon>Cyanophyceae</taxon>
        <taxon>Synechococcales</taxon>
        <taxon>Prochlorococcaceae</taxon>
        <taxon>Prochlorococcus</taxon>
    </lineage>
</organism>
<dbReference type="EMBL" id="CP000553">
    <property type="protein sequence ID" value="ABM75361.1"/>
    <property type="molecule type" value="Genomic_DNA"/>
</dbReference>
<dbReference type="RefSeq" id="WP_011823510.1">
    <property type="nucleotide sequence ID" value="NC_008819.1"/>
</dbReference>
<dbReference type="SMR" id="A2C1K1"/>
<dbReference type="KEGG" id="pme:NATL1_08031"/>
<dbReference type="eggNOG" id="COG0755">
    <property type="taxonomic scope" value="Bacteria"/>
</dbReference>
<dbReference type="HOGENOM" id="CLU_049710_2_4_3"/>
<dbReference type="Proteomes" id="UP000002592">
    <property type="component" value="Chromosome"/>
</dbReference>
<dbReference type="GO" id="GO:0031676">
    <property type="term" value="C:plasma membrane-derived thylakoid membrane"/>
    <property type="evidence" value="ECO:0007669"/>
    <property type="project" value="UniProtKB-SubCell"/>
</dbReference>
<dbReference type="GO" id="GO:0020037">
    <property type="term" value="F:heme binding"/>
    <property type="evidence" value="ECO:0007669"/>
    <property type="project" value="InterPro"/>
</dbReference>
<dbReference type="GO" id="GO:0017004">
    <property type="term" value="P:cytochrome complex assembly"/>
    <property type="evidence" value="ECO:0007669"/>
    <property type="project" value="UniProtKB-UniRule"/>
</dbReference>
<dbReference type="HAMAP" id="MF_01391">
    <property type="entry name" value="CytC_CcsA"/>
    <property type="match status" value="1"/>
</dbReference>
<dbReference type="InterPro" id="IPR002541">
    <property type="entry name" value="Cyt_c_assembly"/>
</dbReference>
<dbReference type="InterPro" id="IPR017562">
    <property type="entry name" value="Cyt_c_biogenesis_CcsA"/>
</dbReference>
<dbReference type="InterPro" id="IPR045062">
    <property type="entry name" value="Cyt_c_biogenesis_CcsA/CcmC"/>
</dbReference>
<dbReference type="NCBIfam" id="TIGR03144">
    <property type="entry name" value="cytochr_II_ccsB"/>
    <property type="match status" value="1"/>
</dbReference>
<dbReference type="PANTHER" id="PTHR30071:SF1">
    <property type="entry name" value="CYTOCHROME B_B6 PROTEIN-RELATED"/>
    <property type="match status" value="1"/>
</dbReference>
<dbReference type="PANTHER" id="PTHR30071">
    <property type="entry name" value="HEME EXPORTER PROTEIN C"/>
    <property type="match status" value="1"/>
</dbReference>
<dbReference type="Pfam" id="PF01578">
    <property type="entry name" value="Cytochrom_C_asm"/>
    <property type="match status" value="1"/>
</dbReference>
<comment type="function">
    <text evidence="2">Required during biogenesis of c-type cytochromes (cytochrome c6 and cytochrome f) at the step of heme attachment.</text>
</comment>
<comment type="subunit">
    <text evidence="1">May interact with ccs1.</text>
</comment>
<comment type="subcellular location">
    <subcellularLocation>
        <location evidence="2">Cellular thylakoid membrane</location>
        <topology evidence="2">Multi-pass membrane protein</topology>
    </subcellularLocation>
</comment>
<comment type="similarity">
    <text evidence="2">Belongs to the CcmF/CycK/Ccl1/NrfE/CcsA family.</text>
</comment>
<proteinExistence type="inferred from homology"/>
<protein>
    <recommendedName>
        <fullName evidence="2">Cytochrome c biogenesis protein CcsA</fullName>
    </recommendedName>
</protein>
<reference key="1">
    <citation type="journal article" date="2007" name="PLoS Genet.">
        <title>Patterns and implications of gene gain and loss in the evolution of Prochlorococcus.</title>
        <authorList>
            <person name="Kettler G.C."/>
            <person name="Martiny A.C."/>
            <person name="Huang K."/>
            <person name="Zucker J."/>
            <person name="Coleman M.L."/>
            <person name="Rodrigue S."/>
            <person name="Chen F."/>
            <person name="Lapidus A."/>
            <person name="Ferriera S."/>
            <person name="Johnson J."/>
            <person name="Steglich C."/>
            <person name="Church G.M."/>
            <person name="Richardson P."/>
            <person name="Chisholm S.W."/>
        </authorList>
    </citation>
    <scope>NUCLEOTIDE SEQUENCE [LARGE SCALE GENOMIC DNA]</scope>
    <source>
        <strain>NATL1A</strain>
    </source>
</reference>
<feature type="chain" id="PRO_0000353711" description="Cytochrome c biogenesis protein CcsA">
    <location>
        <begin position="1"/>
        <end position="315"/>
    </location>
</feature>
<feature type="transmembrane region" description="Helical" evidence="2">
    <location>
        <begin position="14"/>
        <end position="34"/>
    </location>
</feature>
<feature type="transmembrane region" description="Helical" evidence="2">
    <location>
        <begin position="72"/>
        <end position="92"/>
    </location>
</feature>
<feature type="transmembrane region" description="Helical" evidence="2">
    <location>
        <begin position="101"/>
        <end position="121"/>
    </location>
</feature>
<feature type="transmembrane region" description="Helical" evidence="2">
    <location>
        <begin position="146"/>
        <end position="166"/>
    </location>
</feature>
<feature type="transmembrane region" description="Helical" evidence="2">
    <location>
        <begin position="221"/>
        <end position="241"/>
    </location>
</feature>
<feature type="transmembrane region" description="Helical" evidence="2">
    <location>
        <begin position="255"/>
        <end position="272"/>
    </location>
</feature>
<feature type="transmembrane region" description="Helical" evidence="2">
    <location>
        <begin position="282"/>
        <end position="302"/>
    </location>
</feature>
<keyword id="KW-0201">Cytochrome c-type biogenesis</keyword>
<keyword id="KW-0472">Membrane</keyword>
<keyword id="KW-0793">Thylakoid</keyword>
<keyword id="KW-0812">Transmembrane</keyword>
<keyword id="KW-1133">Transmembrane helix</keyword>
<evidence type="ECO:0000250" key="1"/>
<evidence type="ECO:0000255" key="2">
    <source>
        <dbReference type="HAMAP-Rule" id="MF_01391"/>
    </source>
</evidence>
<accession>A2C1K1</accession>
<name>CCSA_PROM1</name>
<sequence length="315" mass="34987">MVDFQLNNFSFDPVVSLGLAAFLFLLIALPISFWSVAGGSDSSKARFLVATSNLFLTSQLILRWWQSGHFPISNLYESLCFLTWGCTLAQLFVERAWRSPIVSAVATPVSLLSIGFASFVLPENLQSSAPLVPALRSSWLVMHVSVIMCSYAALLIGSILSFGVFLVDGKKQFNIRNSSFGSGSFRQSSELYLDERNENLNSIQPIEFTNAEQLDSLSYRSITAGFLLLTVGLISGAVWANEAWGSWWSWDPKETWALICWLVYAAYLHTRLTRGWQGKKPAILAIAGFFVIIVCYIGVNLLGVGLHSYGWFFDT</sequence>